<protein>
    <recommendedName>
        <fullName evidence="1">Glycerol kinase</fullName>
        <ecNumber evidence="1">2.7.1.30</ecNumber>
    </recommendedName>
    <alternativeName>
        <fullName evidence="1">ATP:glycerol 3-phosphotransferase</fullName>
    </alternativeName>
    <alternativeName>
        <fullName evidence="1">Glycerokinase</fullName>
        <shortName evidence="1">GK</shortName>
    </alternativeName>
</protein>
<feature type="chain" id="PRO_1000020801" description="Glycerol kinase">
    <location>
        <begin position="1"/>
        <end position="508"/>
    </location>
</feature>
<feature type="binding site" evidence="1">
    <location>
        <position position="14"/>
    </location>
    <ligand>
        <name>ADP</name>
        <dbReference type="ChEBI" id="CHEBI:456216"/>
    </ligand>
</feature>
<feature type="binding site" evidence="1">
    <location>
        <position position="14"/>
    </location>
    <ligand>
        <name>ATP</name>
        <dbReference type="ChEBI" id="CHEBI:30616"/>
    </ligand>
</feature>
<feature type="binding site" evidence="1">
    <location>
        <position position="14"/>
    </location>
    <ligand>
        <name>sn-glycerol 3-phosphate</name>
        <dbReference type="ChEBI" id="CHEBI:57597"/>
    </ligand>
</feature>
<feature type="binding site" evidence="1">
    <location>
        <position position="15"/>
    </location>
    <ligand>
        <name>ATP</name>
        <dbReference type="ChEBI" id="CHEBI:30616"/>
    </ligand>
</feature>
<feature type="binding site" evidence="1">
    <location>
        <position position="16"/>
    </location>
    <ligand>
        <name>ATP</name>
        <dbReference type="ChEBI" id="CHEBI:30616"/>
    </ligand>
</feature>
<feature type="binding site" evidence="1">
    <location>
        <position position="18"/>
    </location>
    <ligand>
        <name>ADP</name>
        <dbReference type="ChEBI" id="CHEBI:456216"/>
    </ligand>
</feature>
<feature type="binding site" evidence="1">
    <location>
        <position position="84"/>
    </location>
    <ligand>
        <name>glycerol</name>
        <dbReference type="ChEBI" id="CHEBI:17754"/>
    </ligand>
</feature>
<feature type="binding site" evidence="1">
    <location>
        <position position="84"/>
    </location>
    <ligand>
        <name>sn-glycerol 3-phosphate</name>
        <dbReference type="ChEBI" id="CHEBI:57597"/>
    </ligand>
</feature>
<feature type="binding site" evidence="1">
    <location>
        <position position="85"/>
    </location>
    <ligand>
        <name>glycerol</name>
        <dbReference type="ChEBI" id="CHEBI:17754"/>
    </ligand>
</feature>
<feature type="binding site" evidence="1">
    <location>
        <position position="85"/>
    </location>
    <ligand>
        <name>sn-glycerol 3-phosphate</name>
        <dbReference type="ChEBI" id="CHEBI:57597"/>
    </ligand>
</feature>
<feature type="binding site" evidence="1">
    <location>
        <position position="136"/>
    </location>
    <ligand>
        <name>glycerol</name>
        <dbReference type="ChEBI" id="CHEBI:17754"/>
    </ligand>
</feature>
<feature type="binding site" evidence="1">
    <location>
        <position position="136"/>
    </location>
    <ligand>
        <name>sn-glycerol 3-phosphate</name>
        <dbReference type="ChEBI" id="CHEBI:57597"/>
    </ligand>
</feature>
<feature type="binding site" evidence="1">
    <location>
        <position position="246"/>
    </location>
    <ligand>
        <name>glycerol</name>
        <dbReference type="ChEBI" id="CHEBI:17754"/>
    </ligand>
</feature>
<feature type="binding site" evidence="1">
    <location>
        <position position="246"/>
    </location>
    <ligand>
        <name>sn-glycerol 3-phosphate</name>
        <dbReference type="ChEBI" id="CHEBI:57597"/>
    </ligand>
</feature>
<feature type="binding site" evidence="1">
    <location>
        <position position="247"/>
    </location>
    <ligand>
        <name>glycerol</name>
        <dbReference type="ChEBI" id="CHEBI:17754"/>
    </ligand>
</feature>
<feature type="binding site" evidence="1">
    <location>
        <position position="268"/>
    </location>
    <ligand>
        <name>ADP</name>
        <dbReference type="ChEBI" id="CHEBI:456216"/>
    </ligand>
</feature>
<feature type="binding site" evidence="1">
    <location>
        <position position="268"/>
    </location>
    <ligand>
        <name>ATP</name>
        <dbReference type="ChEBI" id="CHEBI:30616"/>
    </ligand>
</feature>
<feature type="binding site" evidence="1">
    <location>
        <position position="311"/>
    </location>
    <ligand>
        <name>ADP</name>
        <dbReference type="ChEBI" id="CHEBI:456216"/>
    </ligand>
</feature>
<feature type="binding site" evidence="1">
    <location>
        <position position="311"/>
    </location>
    <ligand>
        <name>ATP</name>
        <dbReference type="ChEBI" id="CHEBI:30616"/>
    </ligand>
</feature>
<feature type="binding site" evidence="1">
    <location>
        <position position="315"/>
    </location>
    <ligand>
        <name>ATP</name>
        <dbReference type="ChEBI" id="CHEBI:30616"/>
    </ligand>
</feature>
<feature type="binding site" evidence="1">
    <location>
        <position position="412"/>
    </location>
    <ligand>
        <name>ADP</name>
        <dbReference type="ChEBI" id="CHEBI:456216"/>
    </ligand>
</feature>
<feature type="binding site" evidence="1">
    <location>
        <position position="412"/>
    </location>
    <ligand>
        <name>ATP</name>
        <dbReference type="ChEBI" id="CHEBI:30616"/>
    </ligand>
</feature>
<feature type="binding site" evidence="1">
    <location>
        <position position="416"/>
    </location>
    <ligand>
        <name>ADP</name>
        <dbReference type="ChEBI" id="CHEBI:456216"/>
    </ligand>
</feature>
<feature type="modified residue" description="Phosphohistidine; by HPr" evidence="1">
    <location>
        <position position="232"/>
    </location>
</feature>
<dbReference type="EC" id="2.7.1.30" evidence="1"/>
<dbReference type="EMBL" id="CP000260">
    <property type="protein sequence ID" value="ABF34564.1"/>
    <property type="molecule type" value="Genomic_DNA"/>
</dbReference>
<dbReference type="RefSeq" id="WP_002983556.1">
    <property type="nucleotide sequence ID" value="NZ_CVUH01000010.1"/>
</dbReference>
<dbReference type="SMR" id="Q1JFJ5"/>
<dbReference type="GeneID" id="69900456"/>
<dbReference type="KEGG" id="sph:MGAS10270_Spy1499"/>
<dbReference type="HOGENOM" id="CLU_009281_2_3_9"/>
<dbReference type="UniPathway" id="UPA00618">
    <property type="reaction ID" value="UER00672"/>
</dbReference>
<dbReference type="Proteomes" id="UP000002436">
    <property type="component" value="Chromosome"/>
</dbReference>
<dbReference type="GO" id="GO:0005829">
    <property type="term" value="C:cytosol"/>
    <property type="evidence" value="ECO:0007669"/>
    <property type="project" value="TreeGrafter"/>
</dbReference>
<dbReference type="GO" id="GO:0005524">
    <property type="term" value="F:ATP binding"/>
    <property type="evidence" value="ECO:0007669"/>
    <property type="project" value="UniProtKB-UniRule"/>
</dbReference>
<dbReference type="GO" id="GO:0004370">
    <property type="term" value="F:glycerol kinase activity"/>
    <property type="evidence" value="ECO:0000250"/>
    <property type="project" value="UniProtKB"/>
</dbReference>
<dbReference type="GO" id="GO:0019563">
    <property type="term" value="P:glycerol catabolic process"/>
    <property type="evidence" value="ECO:0007669"/>
    <property type="project" value="UniProtKB-UniRule"/>
</dbReference>
<dbReference type="GO" id="GO:0006071">
    <property type="term" value="P:glycerol metabolic process"/>
    <property type="evidence" value="ECO:0000250"/>
    <property type="project" value="UniProtKB"/>
</dbReference>
<dbReference type="GO" id="GO:0006072">
    <property type="term" value="P:glycerol-3-phosphate metabolic process"/>
    <property type="evidence" value="ECO:0007669"/>
    <property type="project" value="InterPro"/>
</dbReference>
<dbReference type="CDD" id="cd07786">
    <property type="entry name" value="FGGY_EcGK_like"/>
    <property type="match status" value="1"/>
</dbReference>
<dbReference type="FunFam" id="3.30.420.40:FF:000007">
    <property type="entry name" value="Glycerol kinase"/>
    <property type="match status" value="1"/>
</dbReference>
<dbReference type="FunFam" id="3.30.420.40:FF:000008">
    <property type="entry name" value="Glycerol kinase"/>
    <property type="match status" value="1"/>
</dbReference>
<dbReference type="Gene3D" id="3.30.420.40">
    <property type="match status" value="2"/>
</dbReference>
<dbReference type="HAMAP" id="MF_00186">
    <property type="entry name" value="Glycerol_kin"/>
    <property type="match status" value="1"/>
</dbReference>
<dbReference type="InterPro" id="IPR043129">
    <property type="entry name" value="ATPase_NBD"/>
</dbReference>
<dbReference type="InterPro" id="IPR000577">
    <property type="entry name" value="Carb_kinase_FGGY"/>
</dbReference>
<dbReference type="InterPro" id="IPR018483">
    <property type="entry name" value="Carb_kinase_FGGY_CS"/>
</dbReference>
<dbReference type="InterPro" id="IPR018485">
    <property type="entry name" value="FGGY_C"/>
</dbReference>
<dbReference type="InterPro" id="IPR018484">
    <property type="entry name" value="FGGY_N"/>
</dbReference>
<dbReference type="InterPro" id="IPR005999">
    <property type="entry name" value="Glycerol_kin"/>
</dbReference>
<dbReference type="NCBIfam" id="TIGR01311">
    <property type="entry name" value="glycerol_kin"/>
    <property type="match status" value="1"/>
</dbReference>
<dbReference type="NCBIfam" id="NF000756">
    <property type="entry name" value="PRK00047.1"/>
    <property type="match status" value="1"/>
</dbReference>
<dbReference type="PANTHER" id="PTHR10196:SF69">
    <property type="entry name" value="GLYCEROL KINASE"/>
    <property type="match status" value="1"/>
</dbReference>
<dbReference type="PANTHER" id="PTHR10196">
    <property type="entry name" value="SUGAR KINASE"/>
    <property type="match status" value="1"/>
</dbReference>
<dbReference type="Pfam" id="PF02782">
    <property type="entry name" value="FGGY_C"/>
    <property type="match status" value="1"/>
</dbReference>
<dbReference type="Pfam" id="PF00370">
    <property type="entry name" value="FGGY_N"/>
    <property type="match status" value="1"/>
</dbReference>
<dbReference type="PIRSF" id="PIRSF000538">
    <property type="entry name" value="GlpK"/>
    <property type="match status" value="1"/>
</dbReference>
<dbReference type="SUPFAM" id="SSF53067">
    <property type="entry name" value="Actin-like ATPase domain"/>
    <property type="match status" value="2"/>
</dbReference>
<dbReference type="PROSITE" id="PS00933">
    <property type="entry name" value="FGGY_KINASES_1"/>
    <property type="match status" value="1"/>
</dbReference>
<dbReference type="PROSITE" id="PS00445">
    <property type="entry name" value="FGGY_KINASES_2"/>
    <property type="match status" value="1"/>
</dbReference>
<keyword id="KW-0067">ATP-binding</keyword>
<keyword id="KW-0319">Glycerol metabolism</keyword>
<keyword id="KW-0418">Kinase</keyword>
<keyword id="KW-0547">Nucleotide-binding</keyword>
<keyword id="KW-0597">Phosphoprotein</keyword>
<keyword id="KW-0808">Transferase</keyword>
<name>GLPK_STRPD</name>
<gene>
    <name evidence="1" type="primary">glpK</name>
    <name type="ordered locus">MGAS10270_Spy1499</name>
</gene>
<proteinExistence type="inferred from homology"/>
<organism>
    <name type="scientific">Streptococcus pyogenes serotype M2 (strain MGAS10270)</name>
    <dbReference type="NCBI Taxonomy" id="370552"/>
    <lineage>
        <taxon>Bacteria</taxon>
        <taxon>Bacillati</taxon>
        <taxon>Bacillota</taxon>
        <taxon>Bacilli</taxon>
        <taxon>Lactobacillales</taxon>
        <taxon>Streptococcaceae</taxon>
        <taxon>Streptococcus</taxon>
    </lineage>
</organism>
<reference key="1">
    <citation type="journal article" date="2006" name="Proc. Natl. Acad. Sci. U.S.A.">
        <title>Molecular genetic anatomy of inter- and intraserotype variation in the human bacterial pathogen group A Streptococcus.</title>
        <authorList>
            <person name="Beres S.B."/>
            <person name="Richter E.W."/>
            <person name="Nagiec M.J."/>
            <person name="Sumby P."/>
            <person name="Porcella S.F."/>
            <person name="DeLeo F.R."/>
            <person name="Musser J.M."/>
        </authorList>
    </citation>
    <scope>NUCLEOTIDE SEQUENCE [LARGE SCALE GENOMIC DNA]</scope>
    <source>
        <strain>MGAS10270</strain>
    </source>
</reference>
<accession>Q1JFJ5</accession>
<evidence type="ECO:0000255" key="1">
    <source>
        <dbReference type="HAMAP-Rule" id="MF_00186"/>
    </source>
</evidence>
<sequence>MSQEKYIMAIDQGTTSSRAIIFNQKGEKVSSSQKEFPQIFPHAGWVEHNANQIWNSVQSVIAGAFIESSIKPSQIEAIGITNQRETTVVWDKKTGVPIYNAIVWQSRQTAPIAEQLKQDGHTKMIHEKTGLVIDAYFSATKIRWILDHVPGAQERAEKGELLFGTIDTWLVWKLTDGAVHVTDYSNAARTMLYNIKDLTWDDEILELLNIPKDMLPEVKSNSEIYGKTAAFHFYGGEVPISGMAGDQQAALFGQLAFEPGMVKNTYGTGSFIIMNTGDEMQLSSNNLLTTIGYGINGKVHYALEGSIFIAGSAIQWLRDGLKMIETSPESEQFALASTSDDEVYVVPAFTGLGAPYWDSNARGSVFGLTRGTSKEDFVKATLQSIAYQVRDVIDTMQVDSGIDIQQLRVDGGAAMNNMLMQFQADILGIDIARAKNLETTALGAAFLAGLAVGYWEDMDALKELNATGQLFKASMNESRKEKLYKGWKRAVKATQVFTQEEDADDDAK</sequence>
<comment type="function">
    <text evidence="1">Key enzyme in the regulation of glycerol uptake and metabolism. Catalyzes the phosphorylation of glycerol to yield sn-glycerol 3-phosphate.</text>
</comment>
<comment type="catalytic activity">
    <reaction evidence="1">
        <text>glycerol + ATP = sn-glycerol 3-phosphate + ADP + H(+)</text>
        <dbReference type="Rhea" id="RHEA:21644"/>
        <dbReference type="ChEBI" id="CHEBI:15378"/>
        <dbReference type="ChEBI" id="CHEBI:17754"/>
        <dbReference type="ChEBI" id="CHEBI:30616"/>
        <dbReference type="ChEBI" id="CHEBI:57597"/>
        <dbReference type="ChEBI" id="CHEBI:456216"/>
        <dbReference type="EC" id="2.7.1.30"/>
    </reaction>
</comment>
<comment type="activity regulation">
    <text evidence="1">Activated by phosphorylation and inhibited by fructose 1,6-bisphosphate (FBP).</text>
</comment>
<comment type="pathway">
    <text evidence="1">Polyol metabolism; glycerol degradation via glycerol kinase pathway; sn-glycerol 3-phosphate from glycerol: step 1/1.</text>
</comment>
<comment type="subunit">
    <text evidence="1">Homotetramer and homodimer (in equilibrium).</text>
</comment>
<comment type="PTM">
    <text evidence="1">The phosphoenolpyruvate-dependent sugar phosphotransferase system (PTS), including enzyme I, and histidine-containing protein (HPr) are required for the phosphorylation, which leads to the activation of the enzyme.</text>
</comment>
<comment type="similarity">
    <text evidence="1">Belongs to the FGGY kinase family.</text>
</comment>